<sequence length="155" mass="17476">MKLQLVAVGTKMPDWVQTGFSEYLRRFPKDMPFELIEIPAGKRGKNADIKRILDKEGEMMLAAAGKNRIVTLDIPGRPWDTPQLARELERWKQDGRDVSLLIGGPEGLSDACKAAAEQSWSLSALTLPHPLVRVIVAESLYRAWSITTNHPYHRE</sequence>
<organism>
    <name type="scientific">Cronobacter sakazakii (strain ATCC BAA-894)</name>
    <name type="common">Enterobacter sakazakii</name>
    <dbReference type="NCBI Taxonomy" id="290339"/>
    <lineage>
        <taxon>Bacteria</taxon>
        <taxon>Pseudomonadati</taxon>
        <taxon>Pseudomonadota</taxon>
        <taxon>Gammaproteobacteria</taxon>
        <taxon>Enterobacterales</taxon>
        <taxon>Enterobacteriaceae</taxon>
        <taxon>Cronobacter</taxon>
    </lineage>
</organism>
<gene>
    <name evidence="1" type="primary">rlmH</name>
    <name type="ordered locus">ESA_02691</name>
</gene>
<evidence type="ECO:0000255" key="1">
    <source>
        <dbReference type="HAMAP-Rule" id="MF_00658"/>
    </source>
</evidence>
<reference key="1">
    <citation type="journal article" date="2010" name="PLoS ONE">
        <title>Genome sequence of Cronobacter sakazakii BAA-894 and comparative genomic hybridization analysis with other Cronobacter species.</title>
        <authorList>
            <person name="Kucerova E."/>
            <person name="Clifton S.W."/>
            <person name="Xia X.Q."/>
            <person name="Long F."/>
            <person name="Porwollik S."/>
            <person name="Fulton L."/>
            <person name="Fronick C."/>
            <person name="Minx P."/>
            <person name="Kyung K."/>
            <person name="Warren W."/>
            <person name="Fulton R."/>
            <person name="Feng D."/>
            <person name="Wollam A."/>
            <person name="Shah N."/>
            <person name="Bhonagiri V."/>
            <person name="Nash W.E."/>
            <person name="Hallsworth-Pepin K."/>
            <person name="Wilson R.K."/>
            <person name="McClelland M."/>
            <person name="Forsythe S.J."/>
        </authorList>
    </citation>
    <scope>NUCLEOTIDE SEQUENCE [LARGE SCALE GENOMIC DNA]</scope>
    <source>
        <strain>ATCC BAA-894</strain>
    </source>
</reference>
<keyword id="KW-0963">Cytoplasm</keyword>
<keyword id="KW-0489">Methyltransferase</keyword>
<keyword id="KW-1185">Reference proteome</keyword>
<keyword id="KW-0698">rRNA processing</keyword>
<keyword id="KW-0949">S-adenosyl-L-methionine</keyword>
<keyword id="KW-0808">Transferase</keyword>
<feature type="chain" id="PRO_1000061783" description="Ribosomal RNA large subunit methyltransferase H">
    <location>
        <begin position="1"/>
        <end position="155"/>
    </location>
</feature>
<feature type="binding site" evidence="1">
    <location>
        <position position="72"/>
    </location>
    <ligand>
        <name>S-adenosyl-L-methionine</name>
        <dbReference type="ChEBI" id="CHEBI:59789"/>
    </ligand>
</feature>
<feature type="binding site" evidence="1">
    <location>
        <position position="103"/>
    </location>
    <ligand>
        <name>S-adenosyl-L-methionine</name>
        <dbReference type="ChEBI" id="CHEBI:59789"/>
    </ligand>
</feature>
<feature type="binding site" evidence="1">
    <location>
        <begin position="122"/>
        <end position="127"/>
    </location>
    <ligand>
        <name>S-adenosyl-L-methionine</name>
        <dbReference type="ChEBI" id="CHEBI:59789"/>
    </ligand>
</feature>
<comment type="function">
    <text evidence="1">Specifically methylates the pseudouridine at position 1915 (m3Psi1915) in 23S rRNA.</text>
</comment>
<comment type="catalytic activity">
    <reaction evidence="1">
        <text>pseudouridine(1915) in 23S rRNA + S-adenosyl-L-methionine = N(3)-methylpseudouridine(1915) in 23S rRNA + S-adenosyl-L-homocysteine + H(+)</text>
        <dbReference type="Rhea" id="RHEA:42752"/>
        <dbReference type="Rhea" id="RHEA-COMP:10221"/>
        <dbReference type="Rhea" id="RHEA-COMP:10222"/>
        <dbReference type="ChEBI" id="CHEBI:15378"/>
        <dbReference type="ChEBI" id="CHEBI:57856"/>
        <dbReference type="ChEBI" id="CHEBI:59789"/>
        <dbReference type="ChEBI" id="CHEBI:65314"/>
        <dbReference type="ChEBI" id="CHEBI:74486"/>
        <dbReference type="EC" id="2.1.1.177"/>
    </reaction>
</comment>
<comment type="subunit">
    <text evidence="1">Homodimer.</text>
</comment>
<comment type="subcellular location">
    <subcellularLocation>
        <location evidence="1">Cytoplasm</location>
    </subcellularLocation>
</comment>
<comment type="similarity">
    <text evidence="1">Belongs to the RNA methyltransferase RlmH family.</text>
</comment>
<accession>A7MK41</accession>
<dbReference type="EC" id="2.1.1.177" evidence="1"/>
<dbReference type="EMBL" id="CP000783">
    <property type="protein sequence ID" value="ABU77923.1"/>
    <property type="molecule type" value="Genomic_DNA"/>
</dbReference>
<dbReference type="RefSeq" id="WP_012125372.1">
    <property type="nucleotide sequence ID" value="NC_009778.1"/>
</dbReference>
<dbReference type="SMR" id="A7MK41"/>
<dbReference type="KEGG" id="esa:ESA_02691"/>
<dbReference type="PATRIC" id="fig|290339.8.peg.2391"/>
<dbReference type="HOGENOM" id="CLU_100552_1_0_6"/>
<dbReference type="Proteomes" id="UP000000260">
    <property type="component" value="Chromosome"/>
</dbReference>
<dbReference type="GO" id="GO:0005737">
    <property type="term" value="C:cytoplasm"/>
    <property type="evidence" value="ECO:0007669"/>
    <property type="project" value="UniProtKB-SubCell"/>
</dbReference>
<dbReference type="GO" id="GO:0070038">
    <property type="term" value="F:rRNA (pseudouridine-N3-)-methyltransferase activity"/>
    <property type="evidence" value="ECO:0007669"/>
    <property type="project" value="UniProtKB-UniRule"/>
</dbReference>
<dbReference type="CDD" id="cd18081">
    <property type="entry name" value="RlmH-like"/>
    <property type="match status" value="1"/>
</dbReference>
<dbReference type="FunFam" id="3.40.1280.10:FF:000004">
    <property type="entry name" value="Ribosomal RNA large subunit methyltransferase H"/>
    <property type="match status" value="1"/>
</dbReference>
<dbReference type="Gene3D" id="3.40.1280.10">
    <property type="match status" value="1"/>
</dbReference>
<dbReference type="HAMAP" id="MF_00658">
    <property type="entry name" value="23SrRNA_methyltr_H"/>
    <property type="match status" value="1"/>
</dbReference>
<dbReference type="InterPro" id="IPR029028">
    <property type="entry name" value="Alpha/beta_knot_MTases"/>
</dbReference>
<dbReference type="InterPro" id="IPR003742">
    <property type="entry name" value="RlmH-like"/>
</dbReference>
<dbReference type="InterPro" id="IPR029026">
    <property type="entry name" value="tRNA_m1G_MTases_N"/>
</dbReference>
<dbReference type="NCBIfam" id="NF000984">
    <property type="entry name" value="PRK00103.1-1"/>
    <property type="match status" value="1"/>
</dbReference>
<dbReference type="NCBIfam" id="NF000986">
    <property type="entry name" value="PRK00103.1-4"/>
    <property type="match status" value="1"/>
</dbReference>
<dbReference type="NCBIfam" id="TIGR00246">
    <property type="entry name" value="tRNA_RlmH_YbeA"/>
    <property type="match status" value="1"/>
</dbReference>
<dbReference type="PANTHER" id="PTHR33603">
    <property type="entry name" value="METHYLTRANSFERASE"/>
    <property type="match status" value="1"/>
</dbReference>
<dbReference type="PANTHER" id="PTHR33603:SF1">
    <property type="entry name" value="RIBOSOMAL RNA LARGE SUBUNIT METHYLTRANSFERASE H"/>
    <property type="match status" value="1"/>
</dbReference>
<dbReference type="Pfam" id="PF02590">
    <property type="entry name" value="SPOUT_MTase"/>
    <property type="match status" value="1"/>
</dbReference>
<dbReference type="PIRSF" id="PIRSF004505">
    <property type="entry name" value="MT_bac"/>
    <property type="match status" value="1"/>
</dbReference>
<dbReference type="SUPFAM" id="SSF75217">
    <property type="entry name" value="alpha/beta knot"/>
    <property type="match status" value="1"/>
</dbReference>
<proteinExistence type="inferred from homology"/>
<name>RLMH_CROS8</name>
<protein>
    <recommendedName>
        <fullName evidence="1">Ribosomal RNA large subunit methyltransferase H</fullName>
        <ecNumber evidence="1">2.1.1.177</ecNumber>
    </recommendedName>
    <alternativeName>
        <fullName evidence="1">23S rRNA (pseudouridine1915-N3)-methyltransferase</fullName>
    </alternativeName>
    <alternativeName>
        <fullName evidence="1">23S rRNA m3Psi1915 methyltransferase</fullName>
    </alternativeName>
    <alternativeName>
        <fullName evidence="1">rRNA (pseudouridine-N3-)-methyltransferase RlmH</fullName>
    </alternativeName>
</protein>